<keyword id="KW-0143">Chaperone</keyword>
<keyword id="KW-0963">Cytoplasm</keyword>
<keyword id="KW-0346">Stress response</keyword>
<gene>
    <name evidence="1" type="primary">grpE</name>
    <name type="ordered locus">SG1798</name>
</gene>
<reference key="1">
    <citation type="journal article" date="2006" name="Genome Res.">
        <title>Massive genome erosion and functional adaptations provide insights into the symbiotic lifestyle of Sodalis glossinidius in the tsetse host.</title>
        <authorList>
            <person name="Toh H."/>
            <person name="Weiss B.L."/>
            <person name="Perkin S.A.H."/>
            <person name="Yamashita A."/>
            <person name="Oshima K."/>
            <person name="Hattori M."/>
            <person name="Aksoy S."/>
        </authorList>
    </citation>
    <scope>NUCLEOTIDE SEQUENCE [LARGE SCALE GENOMIC DNA]</scope>
    <source>
        <strain>morsitans</strain>
    </source>
</reference>
<proteinExistence type="inferred from homology"/>
<organism>
    <name type="scientific">Sodalis glossinidius (strain morsitans)</name>
    <dbReference type="NCBI Taxonomy" id="343509"/>
    <lineage>
        <taxon>Bacteria</taxon>
        <taxon>Pseudomonadati</taxon>
        <taxon>Pseudomonadota</taxon>
        <taxon>Gammaproteobacteria</taxon>
        <taxon>Enterobacterales</taxon>
        <taxon>Bruguierivoracaceae</taxon>
        <taxon>Sodalis</taxon>
    </lineage>
</organism>
<protein>
    <recommendedName>
        <fullName evidence="1">Protein GrpE</fullName>
    </recommendedName>
    <alternativeName>
        <fullName evidence="1">HSP-70 cofactor</fullName>
    </alternativeName>
</protein>
<evidence type="ECO:0000255" key="1">
    <source>
        <dbReference type="HAMAP-Rule" id="MF_01151"/>
    </source>
</evidence>
<evidence type="ECO:0000256" key="2">
    <source>
        <dbReference type="SAM" id="MobiDB-lite"/>
    </source>
</evidence>
<sequence length="195" mass="21795">MSSKEQNTPDEQVSQESEMEQGQQAEAAPETVDVVDPRDERIAELEAALSQAQQREHDSVLRAKAEMENVRRRSEQDVEKAHKFALERFAGELLPVIDNLERALDMSDKANAELASTIEGIELTLKSLLDAVRKFGLDVVGDTHVPFNPEVHQAMTMLESDEHEPNQVMMVMQKGYTLNGRLIRPAMVAVSKAKS</sequence>
<name>GRPE_SODGM</name>
<dbReference type="EMBL" id="AP008232">
    <property type="protein sequence ID" value="BAE75073.1"/>
    <property type="molecule type" value="Genomic_DNA"/>
</dbReference>
<dbReference type="RefSeq" id="WP_011411622.1">
    <property type="nucleotide sequence ID" value="NC_007712.1"/>
</dbReference>
<dbReference type="SMR" id="Q2NS02"/>
<dbReference type="STRING" id="343509.SG1798"/>
<dbReference type="KEGG" id="sgl:SG1798"/>
<dbReference type="eggNOG" id="COG0576">
    <property type="taxonomic scope" value="Bacteria"/>
</dbReference>
<dbReference type="HOGENOM" id="CLU_057217_6_0_6"/>
<dbReference type="OrthoDB" id="9789811at2"/>
<dbReference type="BioCyc" id="SGLO343509:SGP1_RS16280-MONOMER"/>
<dbReference type="Proteomes" id="UP000001932">
    <property type="component" value="Chromosome"/>
</dbReference>
<dbReference type="GO" id="GO:0005829">
    <property type="term" value="C:cytosol"/>
    <property type="evidence" value="ECO:0007669"/>
    <property type="project" value="TreeGrafter"/>
</dbReference>
<dbReference type="GO" id="GO:0000774">
    <property type="term" value="F:adenyl-nucleotide exchange factor activity"/>
    <property type="evidence" value="ECO:0007669"/>
    <property type="project" value="InterPro"/>
</dbReference>
<dbReference type="GO" id="GO:0042803">
    <property type="term" value="F:protein homodimerization activity"/>
    <property type="evidence" value="ECO:0007669"/>
    <property type="project" value="InterPro"/>
</dbReference>
<dbReference type="GO" id="GO:0051087">
    <property type="term" value="F:protein-folding chaperone binding"/>
    <property type="evidence" value="ECO:0007669"/>
    <property type="project" value="InterPro"/>
</dbReference>
<dbReference type="GO" id="GO:0051082">
    <property type="term" value="F:unfolded protein binding"/>
    <property type="evidence" value="ECO:0007669"/>
    <property type="project" value="TreeGrafter"/>
</dbReference>
<dbReference type="GO" id="GO:0006457">
    <property type="term" value="P:protein folding"/>
    <property type="evidence" value="ECO:0007669"/>
    <property type="project" value="InterPro"/>
</dbReference>
<dbReference type="CDD" id="cd00446">
    <property type="entry name" value="GrpE"/>
    <property type="match status" value="1"/>
</dbReference>
<dbReference type="FunFam" id="2.30.22.10:FF:000001">
    <property type="entry name" value="Protein GrpE"/>
    <property type="match status" value="1"/>
</dbReference>
<dbReference type="FunFam" id="3.90.20.20:FF:000001">
    <property type="entry name" value="Protein GrpE"/>
    <property type="match status" value="1"/>
</dbReference>
<dbReference type="Gene3D" id="3.90.20.20">
    <property type="match status" value="1"/>
</dbReference>
<dbReference type="Gene3D" id="2.30.22.10">
    <property type="entry name" value="Head domain of nucleotide exchange factor GrpE"/>
    <property type="match status" value="1"/>
</dbReference>
<dbReference type="HAMAP" id="MF_01151">
    <property type="entry name" value="GrpE"/>
    <property type="match status" value="1"/>
</dbReference>
<dbReference type="InterPro" id="IPR000740">
    <property type="entry name" value="GrpE"/>
</dbReference>
<dbReference type="InterPro" id="IPR013805">
    <property type="entry name" value="GrpE_coiled_coil"/>
</dbReference>
<dbReference type="InterPro" id="IPR009012">
    <property type="entry name" value="GrpE_head"/>
</dbReference>
<dbReference type="NCBIfam" id="NF010737">
    <property type="entry name" value="PRK14139.1"/>
    <property type="match status" value="1"/>
</dbReference>
<dbReference type="NCBIfam" id="NF010738">
    <property type="entry name" value="PRK14140.1"/>
    <property type="match status" value="1"/>
</dbReference>
<dbReference type="NCBIfam" id="NF010748">
    <property type="entry name" value="PRK14150.1"/>
    <property type="match status" value="1"/>
</dbReference>
<dbReference type="PANTHER" id="PTHR21237">
    <property type="entry name" value="GRPE PROTEIN"/>
    <property type="match status" value="1"/>
</dbReference>
<dbReference type="PANTHER" id="PTHR21237:SF23">
    <property type="entry name" value="GRPE PROTEIN HOMOLOG, MITOCHONDRIAL"/>
    <property type="match status" value="1"/>
</dbReference>
<dbReference type="Pfam" id="PF01025">
    <property type="entry name" value="GrpE"/>
    <property type="match status" value="1"/>
</dbReference>
<dbReference type="PRINTS" id="PR00773">
    <property type="entry name" value="GRPEPROTEIN"/>
</dbReference>
<dbReference type="SUPFAM" id="SSF58014">
    <property type="entry name" value="Coiled-coil domain of nucleotide exchange factor GrpE"/>
    <property type="match status" value="1"/>
</dbReference>
<dbReference type="SUPFAM" id="SSF51064">
    <property type="entry name" value="Head domain of nucleotide exchange factor GrpE"/>
    <property type="match status" value="1"/>
</dbReference>
<dbReference type="PROSITE" id="PS01071">
    <property type="entry name" value="GRPE"/>
    <property type="match status" value="1"/>
</dbReference>
<comment type="function">
    <text evidence="1">Participates actively in the response to hyperosmotic and heat shock by preventing the aggregation of stress-denatured proteins, in association with DnaK and GrpE. It is the nucleotide exchange factor for DnaK and may function as a thermosensor. Unfolded proteins bind initially to DnaJ; upon interaction with the DnaJ-bound protein, DnaK hydrolyzes its bound ATP, resulting in the formation of a stable complex. GrpE releases ADP from DnaK; ATP binding to DnaK triggers the release of the substrate protein, thus completing the reaction cycle. Several rounds of ATP-dependent interactions between DnaJ, DnaK and GrpE are required for fully efficient folding.</text>
</comment>
<comment type="subunit">
    <text evidence="1">Homodimer.</text>
</comment>
<comment type="subcellular location">
    <subcellularLocation>
        <location evidence="1">Cytoplasm</location>
    </subcellularLocation>
</comment>
<comment type="similarity">
    <text evidence="1">Belongs to the GrpE family.</text>
</comment>
<feature type="chain" id="PRO_1000053644" description="Protein GrpE">
    <location>
        <begin position="1"/>
        <end position="195"/>
    </location>
</feature>
<feature type="region of interest" description="Disordered" evidence="2">
    <location>
        <begin position="1"/>
        <end position="40"/>
    </location>
</feature>
<feature type="compositionally biased region" description="Polar residues" evidence="2">
    <location>
        <begin position="1"/>
        <end position="24"/>
    </location>
</feature>
<accession>Q2NS02</accession>